<proteinExistence type="evidence at protein level"/>
<organism>
    <name type="scientific">Acinetobacter lwoffii</name>
    <dbReference type="NCBI Taxonomy" id="28090"/>
    <lineage>
        <taxon>Bacteria</taxon>
        <taxon>Pseudomonadati</taxon>
        <taxon>Pseudomonadota</taxon>
        <taxon>Gammaproteobacteria</taxon>
        <taxon>Moraxellales</taxon>
        <taxon>Moraxellaceae</taxon>
        <taxon>Acinetobacter</taxon>
    </lineage>
</organism>
<evidence type="ECO:0000250" key="1"/>
<evidence type="ECO:0000269" key="2">
    <source>
    </source>
</evidence>
<evidence type="ECO:0000305" key="3"/>
<feature type="initiator methionine" description="Removed" evidence="2">
    <location>
        <position position="1"/>
    </location>
</feature>
<feature type="chain" id="PRO_0000085081" description="Catechol 1,2-dioxygenase 1">
    <location>
        <begin position="2"/>
        <end position="311"/>
    </location>
</feature>
<feature type="binding site" evidence="1">
    <location>
        <position position="164"/>
    </location>
    <ligand>
        <name>Fe cation</name>
        <dbReference type="ChEBI" id="CHEBI:24875"/>
    </ligand>
</feature>
<feature type="binding site" evidence="1">
    <location>
        <position position="200"/>
    </location>
    <ligand>
        <name>Fe cation</name>
        <dbReference type="ChEBI" id="CHEBI:24875"/>
    </ligand>
</feature>
<feature type="binding site" evidence="1">
    <location>
        <position position="224"/>
    </location>
    <ligand>
        <name>Fe cation</name>
        <dbReference type="ChEBI" id="CHEBI:24875"/>
    </ligand>
</feature>
<feature type="binding site" evidence="1">
    <location>
        <position position="226"/>
    </location>
    <ligand>
        <name>Fe cation</name>
        <dbReference type="ChEBI" id="CHEBI:24875"/>
    </ligand>
</feature>
<dbReference type="EC" id="1.13.11.1"/>
<dbReference type="EMBL" id="U77658">
    <property type="protein sequence ID" value="AAC46228.1"/>
    <property type="molecule type" value="Genomic_DNA"/>
</dbReference>
<dbReference type="PIR" id="JC5943">
    <property type="entry name" value="JC5943"/>
</dbReference>
<dbReference type="SMR" id="O33948"/>
<dbReference type="UniPathway" id="UPA00157">
    <property type="reaction ID" value="UER00258"/>
</dbReference>
<dbReference type="GO" id="GO:0018576">
    <property type="term" value="F:catechol 1,2-dioxygenase activity"/>
    <property type="evidence" value="ECO:0007669"/>
    <property type="project" value="UniProtKB-EC"/>
</dbReference>
<dbReference type="GO" id="GO:0008199">
    <property type="term" value="F:ferric iron binding"/>
    <property type="evidence" value="ECO:0007669"/>
    <property type="project" value="InterPro"/>
</dbReference>
<dbReference type="GO" id="GO:0042952">
    <property type="term" value="P:beta-ketoadipate pathway"/>
    <property type="evidence" value="ECO:0007669"/>
    <property type="project" value="UniProtKB-UniPathway"/>
</dbReference>
<dbReference type="GO" id="GO:0019614">
    <property type="term" value="P:catechol-containing compound catabolic process"/>
    <property type="evidence" value="ECO:0007669"/>
    <property type="project" value="InterPro"/>
</dbReference>
<dbReference type="CDD" id="cd03460">
    <property type="entry name" value="1_2-CTD"/>
    <property type="match status" value="1"/>
</dbReference>
<dbReference type="Gene3D" id="2.60.130.10">
    <property type="entry name" value="Aromatic compound dioxygenase"/>
    <property type="match status" value="1"/>
</dbReference>
<dbReference type="InterPro" id="IPR007535">
    <property type="entry name" value="Catechol_dOase_N"/>
</dbReference>
<dbReference type="InterPro" id="IPR012801">
    <property type="entry name" value="Cchol_dOase_prob"/>
</dbReference>
<dbReference type="InterPro" id="IPR000627">
    <property type="entry name" value="Intradiol_dOase_C"/>
</dbReference>
<dbReference type="InterPro" id="IPR015889">
    <property type="entry name" value="Intradiol_dOase_core"/>
</dbReference>
<dbReference type="InterPro" id="IPR050770">
    <property type="entry name" value="Intradiol_RC_Dioxygenase"/>
</dbReference>
<dbReference type="NCBIfam" id="TIGR02439">
    <property type="entry name" value="catechol_proteo"/>
    <property type="match status" value="1"/>
</dbReference>
<dbReference type="PANTHER" id="PTHR33711">
    <property type="entry name" value="DIOXYGENASE, PUTATIVE (AFU_ORTHOLOGUE AFUA_2G02910)-RELATED"/>
    <property type="match status" value="1"/>
</dbReference>
<dbReference type="PANTHER" id="PTHR33711:SF7">
    <property type="entry name" value="INTRADIOL RING-CLEAVAGE DIOXYGENASES DOMAIN-CONTAINING PROTEIN-RELATED"/>
    <property type="match status" value="1"/>
</dbReference>
<dbReference type="Pfam" id="PF00775">
    <property type="entry name" value="Dioxygenase_C"/>
    <property type="match status" value="1"/>
</dbReference>
<dbReference type="Pfam" id="PF04444">
    <property type="entry name" value="Dioxygenase_N"/>
    <property type="match status" value="1"/>
</dbReference>
<dbReference type="SUPFAM" id="SSF49482">
    <property type="entry name" value="Aromatic compound dioxygenase"/>
    <property type="match status" value="1"/>
</dbReference>
<dbReference type="PROSITE" id="PS00083">
    <property type="entry name" value="INTRADIOL_DIOXYGENAS"/>
    <property type="match status" value="1"/>
</dbReference>
<name>CATA1_ACILW</name>
<reference key="1">
    <citation type="journal article" date="1997" name="J. Bacteriol.">
        <title>Cloning and characterization of two catA genes in Acinetobacter lwoffii K24.</title>
        <authorList>
            <person name="Kim S.I."/>
            <person name="Leem S.-H."/>
            <person name="Choi J.-S."/>
            <person name="Chung Y.H."/>
            <person name="Kim S."/>
            <person name="Park Y.-M."/>
            <person name="Park Y.K."/>
            <person name="Lee Y.N."/>
            <person name="Ha K.-S."/>
        </authorList>
    </citation>
    <scope>NUCLEOTIDE SEQUENCE [GENOMIC DNA]</scope>
    <scope>PROTEIN SEQUENCE OF 2-36; 45-72 AND 163-180</scope>
    <source>
        <strain>K24</strain>
    </source>
</reference>
<reference key="2">
    <citation type="journal article" date="1998" name="Biochem. Biophys. Res. Commun.">
        <title>Organization and transcriptional characterization of the cat1 gene cluster in Acinetobacter lwoffi K24.</title>
        <authorList>
            <person name="Kim S.I."/>
            <person name="Leem S.-H."/>
            <person name="Choi J.-S."/>
            <person name="Ha K.-S."/>
        </authorList>
    </citation>
    <scope>NUCLEOTIDE SEQUENCE [GENOMIC DNA] OF 1-29</scope>
    <source>
        <strain>K24</strain>
    </source>
</reference>
<sequence length="311" mass="33378">MSIKVFGTKEVQDLLKAATNLEGKGGNARSKQIVHRLLSDLFKAIDDLDITPDEVWAGVNYLNKLGQDGEATLLAAGSGLEKYLDIRLDAADKAEGIEGGTPRTIEGPLYVAGATVHDGVSKIDINPDEDAGPLVIHGTVTGPDGKPVAGAVVECWHANSKGFYSHFDPTGAQSDFNLRGAVKTGADGKYEFRTLMPVGYGCPPQGATQQLLNVLGRHGNRPAHVHFFVSSDSARKLTTQFNIEGDPLIWDDFAYATREELIPPVTEKKGGTALGLKADTYKDIEFNLTLTSLVKGKDNQVVHRLRAEVAA</sequence>
<comment type="function">
    <text>Can cleave 4-methyl-, 4-chloro-, and 3-methoxycatechol at lower rates than catechol, but has no activity with 4-nitrocatechol or protocatechuic acid.</text>
</comment>
<comment type="catalytic activity">
    <reaction>
        <text>catechol + O2 = cis,cis-muconate + 2 H(+)</text>
        <dbReference type="Rhea" id="RHEA:23852"/>
        <dbReference type="ChEBI" id="CHEBI:15378"/>
        <dbReference type="ChEBI" id="CHEBI:15379"/>
        <dbReference type="ChEBI" id="CHEBI:18135"/>
        <dbReference type="ChEBI" id="CHEBI:32379"/>
        <dbReference type="EC" id="1.13.11.1"/>
    </reaction>
</comment>
<comment type="cofactor">
    <cofactor>
        <name>Fe(3+)</name>
        <dbReference type="ChEBI" id="CHEBI:29034"/>
    </cofactor>
    <text>Binds 1 Fe(3+) ion per subunit.</text>
</comment>
<comment type="pathway">
    <text>Aromatic compound metabolism; beta-ketoadipate pathway; 5-oxo-4,5-dihydro-2-furylacetate from catechol: step 1/3.</text>
</comment>
<comment type="subunit">
    <text evidence="3">Homodimer.</text>
</comment>
<comment type="induction">
    <text>By aniline.</text>
</comment>
<comment type="similarity">
    <text evidence="3">Belongs to the intradiol ring-cleavage dioxygenase family.</text>
</comment>
<accession>O33948</accession>
<protein>
    <recommendedName>
        <fullName>Catechol 1,2-dioxygenase 1</fullName>
        <ecNumber>1.13.11.1</ecNumber>
    </recommendedName>
    <alternativeName>
        <fullName>1,2-CTD 1</fullName>
    </alternativeName>
    <alternativeName>
        <fullName>CDI1</fullName>
    </alternativeName>
</protein>
<gene>
    <name type="primary">catA1</name>
</gene>
<keyword id="KW-0058">Aromatic hydrocarbons catabolism</keyword>
<keyword id="KW-0223">Dioxygenase</keyword>
<keyword id="KW-0903">Direct protein sequencing</keyword>
<keyword id="KW-0408">Iron</keyword>
<keyword id="KW-0479">Metal-binding</keyword>
<keyword id="KW-0560">Oxidoreductase</keyword>